<keyword id="KW-1003">Cell membrane</keyword>
<keyword id="KW-0449">Lipoprotein</keyword>
<keyword id="KW-0472">Membrane</keyword>
<keyword id="KW-0488">Methylation</keyword>
<keyword id="KW-0636">Prenylation</keyword>
<keyword id="KW-1185">Reference proteome</keyword>
<keyword id="KW-0807">Transducer</keyword>
<accession>P63210</accession>
<accession>O43835</accession>
<accession>Q08447</accession>
<accession>Q16026</accession>
<name>GBG1_CANLF</name>
<feature type="initiator methionine" description="Removed" evidence="1">
    <location>
        <position position="1"/>
    </location>
</feature>
<feature type="chain" id="PRO_0000012603" description="Guanine nucleotide-binding protein G(T) subunit gamma-T1" evidence="1">
    <location>
        <begin position="2"/>
        <end position="71"/>
    </location>
</feature>
<feature type="propeptide" id="PRO_0000012604" description="Removed in mature form" evidence="1">
    <location>
        <begin position="72"/>
        <end position="74"/>
    </location>
</feature>
<feature type="modified residue" description="Cysteine methyl ester" evidence="1">
    <location>
        <position position="71"/>
    </location>
</feature>
<feature type="lipid moiety-binding region" description="S-farnesyl cysteine" evidence="1">
    <location>
        <position position="71"/>
    </location>
</feature>
<proteinExistence type="evidence at transcript level"/>
<organism>
    <name type="scientific">Canis lupus familiaris</name>
    <name type="common">Dog</name>
    <name type="synonym">Canis familiaris</name>
    <dbReference type="NCBI Taxonomy" id="9615"/>
    <lineage>
        <taxon>Eukaryota</taxon>
        <taxon>Metazoa</taxon>
        <taxon>Chordata</taxon>
        <taxon>Craniata</taxon>
        <taxon>Vertebrata</taxon>
        <taxon>Euteleostomi</taxon>
        <taxon>Mammalia</taxon>
        <taxon>Eutheria</taxon>
        <taxon>Laurasiatheria</taxon>
        <taxon>Carnivora</taxon>
        <taxon>Caniformia</taxon>
        <taxon>Canidae</taxon>
        <taxon>Canis</taxon>
    </lineage>
</organism>
<gene>
    <name type="primary">GNGT1</name>
</gene>
<dbReference type="EMBL" id="Z75156">
    <property type="protein sequence ID" value="CAA99470.1"/>
    <property type="molecule type" value="mRNA"/>
</dbReference>
<dbReference type="EMBL" id="AJ507014">
    <property type="protein sequence ID" value="CAD44991.1"/>
    <property type="molecule type" value="Genomic_DNA"/>
</dbReference>
<dbReference type="EMBL" id="AJ507015">
    <property type="protein sequence ID" value="CAD44991.1"/>
    <property type="status" value="JOINED"/>
    <property type="molecule type" value="Genomic_DNA"/>
</dbReference>
<dbReference type="RefSeq" id="NP_001003225.1">
    <property type="nucleotide sequence ID" value="NM_001003225.1"/>
</dbReference>
<dbReference type="RefSeq" id="XP_005628403.1">
    <property type="nucleotide sequence ID" value="XM_005628346.2"/>
</dbReference>
<dbReference type="RefSeq" id="XP_038541851.1">
    <property type="nucleotide sequence ID" value="XM_038685923.1"/>
</dbReference>
<dbReference type="RefSeq" id="XP_038541852.1">
    <property type="nucleotide sequence ID" value="XM_038685924.1"/>
</dbReference>
<dbReference type="RefSeq" id="XP_038541853.1">
    <property type="nucleotide sequence ID" value="XM_038685925.1"/>
</dbReference>
<dbReference type="RefSeq" id="XP_038541854.1">
    <property type="nucleotide sequence ID" value="XM_038685926.1"/>
</dbReference>
<dbReference type="RefSeq" id="XP_038541855.1">
    <property type="nucleotide sequence ID" value="XM_038685927.1"/>
</dbReference>
<dbReference type="RefSeq" id="XP_038541856.1">
    <property type="nucleotide sequence ID" value="XM_038685928.1"/>
</dbReference>
<dbReference type="RefSeq" id="XP_038541857.1">
    <property type="nucleotide sequence ID" value="XM_038685929.1"/>
</dbReference>
<dbReference type="RefSeq" id="XP_038541858.1">
    <property type="nucleotide sequence ID" value="XM_038685930.1"/>
</dbReference>
<dbReference type="RefSeq" id="XP_038541859.1">
    <property type="nucleotide sequence ID" value="XM_038685931.1"/>
</dbReference>
<dbReference type="RefSeq" id="XP_038541860.1">
    <property type="nucleotide sequence ID" value="XM_038685932.1"/>
</dbReference>
<dbReference type="RefSeq" id="XP_038541861.1">
    <property type="nucleotide sequence ID" value="XM_038685933.1"/>
</dbReference>
<dbReference type="RefSeq" id="XP_038541862.1">
    <property type="nucleotide sequence ID" value="XM_038685934.1"/>
</dbReference>
<dbReference type="RefSeq" id="XP_038541863.1">
    <property type="nucleotide sequence ID" value="XM_038685935.1"/>
</dbReference>
<dbReference type="SMR" id="P63210"/>
<dbReference type="FunCoup" id="P63210">
    <property type="interactions" value="375"/>
</dbReference>
<dbReference type="STRING" id="9615.ENSCAFP00000003005"/>
<dbReference type="PaxDb" id="9615-ENSCAFP00000003005"/>
<dbReference type="Ensembl" id="ENSCAFT00000003233.4">
    <property type="protein sequence ID" value="ENSCAFP00000003005.2"/>
    <property type="gene ID" value="ENSCAFG00000002044.4"/>
</dbReference>
<dbReference type="Ensembl" id="ENSCAFT00030027907.1">
    <property type="protein sequence ID" value="ENSCAFP00030024354.1"/>
    <property type="gene ID" value="ENSCAFG00030015119.1"/>
</dbReference>
<dbReference type="Ensembl" id="ENSCAFT00040020630.1">
    <property type="protein sequence ID" value="ENSCAFP00040017906.1"/>
    <property type="gene ID" value="ENSCAFG00040011163.1"/>
</dbReference>
<dbReference type="Ensembl" id="ENSCAFT00845028968.1">
    <property type="protein sequence ID" value="ENSCAFP00845022789.1"/>
    <property type="gene ID" value="ENSCAFG00845016275.1"/>
</dbReference>
<dbReference type="GeneID" id="403895"/>
<dbReference type="KEGG" id="cfa:403895"/>
<dbReference type="CTD" id="2792"/>
<dbReference type="VEuPathDB" id="HostDB:ENSCAFG00845016275"/>
<dbReference type="VGNC" id="VGNC:41324">
    <property type="gene designation" value="GNGT1"/>
</dbReference>
<dbReference type="GeneTree" id="ENSGT01100000263525"/>
<dbReference type="HOGENOM" id="CLU_168377_2_0_1"/>
<dbReference type="InParanoid" id="P63210"/>
<dbReference type="OMA" id="CEEVMEY"/>
<dbReference type="OrthoDB" id="9933679at2759"/>
<dbReference type="Reactome" id="R-CFA-1296041">
    <property type="pathway name" value="Activation of G protein gated Potassium channels"/>
</dbReference>
<dbReference type="Reactome" id="R-CFA-202040">
    <property type="pathway name" value="G-protein activation"/>
</dbReference>
<dbReference type="Reactome" id="R-CFA-2485179">
    <property type="pathway name" value="Activation of the phototransduction cascade"/>
</dbReference>
<dbReference type="Reactome" id="R-CFA-381676">
    <property type="pathway name" value="Glucagon-like Peptide-1 (GLP1) regulates insulin secretion"/>
</dbReference>
<dbReference type="Reactome" id="R-CFA-392170">
    <property type="pathway name" value="ADP signalling through P2Y purinoceptor 12"/>
</dbReference>
<dbReference type="Reactome" id="R-CFA-392451">
    <property type="pathway name" value="G beta:gamma signalling through PI3Kgamma"/>
</dbReference>
<dbReference type="Reactome" id="R-CFA-392851">
    <property type="pathway name" value="Prostacyclin signalling through prostacyclin receptor"/>
</dbReference>
<dbReference type="Reactome" id="R-CFA-400042">
    <property type="pathway name" value="Adrenaline,noradrenaline inhibits insulin secretion"/>
</dbReference>
<dbReference type="Reactome" id="R-CFA-4086398">
    <property type="pathway name" value="Ca2+ pathway"/>
</dbReference>
<dbReference type="Reactome" id="R-CFA-416476">
    <property type="pathway name" value="G alpha (q) signalling events"/>
</dbReference>
<dbReference type="Reactome" id="R-CFA-416482">
    <property type="pathway name" value="G alpha (12/13) signalling events"/>
</dbReference>
<dbReference type="Reactome" id="R-CFA-418217">
    <property type="pathway name" value="G beta:gamma signalling through PLC beta"/>
</dbReference>
<dbReference type="Reactome" id="R-CFA-418592">
    <property type="pathway name" value="ADP signalling through P2Y purinoceptor 1"/>
</dbReference>
<dbReference type="Reactome" id="R-CFA-418594">
    <property type="pathway name" value="G alpha (i) signalling events"/>
</dbReference>
<dbReference type="Reactome" id="R-CFA-418597">
    <property type="pathway name" value="G alpha (z) signalling events"/>
</dbReference>
<dbReference type="Reactome" id="R-CFA-420092">
    <property type="pathway name" value="Glucagon-type ligand receptors"/>
</dbReference>
<dbReference type="Reactome" id="R-CFA-428930">
    <property type="pathway name" value="Thromboxane signalling through TP receptor"/>
</dbReference>
<dbReference type="Reactome" id="R-CFA-432040">
    <property type="pathway name" value="Vasopressin regulates renal water homeostasis via Aquaporins"/>
</dbReference>
<dbReference type="Reactome" id="R-CFA-456926">
    <property type="pathway name" value="Thrombin signalling through proteinase activated receptors (PARs)"/>
</dbReference>
<dbReference type="Reactome" id="R-CFA-500657">
    <property type="pathway name" value="Presynaptic function of Kainate receptors"/>
</dbReference>
<dbReference type="Reactome" id="R-CFA-6814122">
    <property type="pathway name" value="Cooperation of PDCL (PhLP1) and TRiC/CCT in G-protein beta folding"/>
</dbReference>
<dbReference type="Reactome" id="R-CFA-8964315">
    <property type="pathway name" value="G beta:gamma signalling through BTK"/>
</dbReference>
<dbReference type="Reactome" id="R-CFA-8964616">
    <property type="pathway name" value="G beta:gamma signalling through CDC42"/>
</dbReference>
<dbReference type="Reactome" id="R-CFA-9009391">
    <property type="pathway name" value="Extra-nuclear estrogen signaling"/>
</dbReference>
<dbReference type="Reactome" id="R-CFA-9634597">
    <property type="pathway name" value="GPER1 signaling"/>
</dbReference>
<dbReference type="Reactome" id="R-CFA-9856530">
    <property type="pathway name" value="High laminar flow shear stress activates signaling by PIEZO1 and PECAM1:CDH5:KDR in endothelial cells"/>
</dbReference>
<dbReference type="Reactome" id="R-CFA-997272">
    <property type="pathway name" value="Inhibition of voltage gated Ca2+ channels via Gbeta/gamma subunits"/>
</dbReference>
<dbReference type="Proteomes" id="UP000002254">
    <property type="component" value="Chromosome 14"/>
</dbReference>
<dbReference type="Proteomes" id="UP000694429">
    <property type="component" value="Chromosome 14"/>
</dbReference>
<dbReference type="Proteomes" id="UP000694542">
    <property type="component" value="Chromosome 14"/>
</dbReference>
<dbReference type="Proteomes" id="UP000805418">
    <property type="component" value="Chromosome 14"/>
</dbReference>
<dbReference type="Bgee" id="ENSCAFG00000002044">
    <property type="expression patterns" value="Expressed in testis and 1 other cell type or tissue"/>
</dbReference>
<dbReference type="GO" id="GO:0005834">
    <property type="term" value="C:heterotrimeric G-protein complex"/>
    <property type="evidence" value="ECO:0000318"/>
    <property type="project" value="GO_Central"/>
</dbReference>
<dbReference type="GO" id="GO:0031681">
    <property type="term" value="F:G-protein beta-subunit binding"/>
    <property type="evidence" value="ECO:0000318"/>
    <property type="project" value="GO_Central"/>
</dbReference>
<dbReference type="GO" id="GO:0007186">
    <property type="term" value="P:G protein-coupled receptor signaling pathway"/>
    <property type="evidence" value="ECO:0000318"/>
    <property type="project" value="GO_Central"/>
</dbReference>
<dbReference type="CDD" id="cd00068">
    <property type="entry name" value="GGL"/>
    <property type="match status" value="1"/>
</dbReference>
<dbReference type="FunFam" id="4.10.260.10:FF:000001">
    <property type="entry name" value="Guanine nucleotide-binding protein subunit gamma"/>
    <property type="match status" value="1"/>
</dbReference>
<dbReference type="Gene3D" id="4.10.260.10">
    <property type="entry name" value="Transducin (heterotrimeric G protein), gamma chain"/>
    <property type="match status" value="1"/>
</dbReference>
<dbReference type="InterPro" id="IPR015898">
    <property type="entry name" value="G-protein_gamma-like_dom"/>
</dbReference>
<dbReference type="InterPro" id="IPR036284">
    <property type="entry name" value="GGL_sf"/>
</dbReference>
<dbReference type="InterPro" id="IPR001770">
    <property type="entry name" value="Gprotein-gamma"/>
</dbReference>
<dbReference type="PANTHER" id="PTHR13809">
    <property type="entry name" value="GUANINE NUCLEOTIDE-BINDING PROTEIN GAMMA SUBUNIT"/>
    <property type="match status" value="1"/>
</dbReference>
<dbReference type="Pfam" id="PF00631">
    <property type="entry name" value="G-gamma"/>
    <property type="match status" value="1"/>
</dbReference>
<dbReference type="PRINTS" id="PR00321">
    <property type="entry name" value="GPROTEING"/>
</dbReference>
<dbReference type="SMART" id="SM01224">
    <property type="entry name" value="G_gamma"/>
    <property type="match status" value="1"/>
</dbReference>
<dbReference type="SMART" id="SM00224">
    <property type="entry name" value="GGL"/>
    <property type="match status" value="1"/>
</dbReference>
<dbReference type="SUPFAM" id="SSF48670">
    <property type="entry name" value="Transducin (heterotrimeric G protein), gamma chain"/>
    <property type="match status" value="1"/>
</dbReference>
<dbReference type="PROSITE" id="PS50058">
    <property type="entry name" value="G_PROTEIN_GAMMA"/>
    <property type="match status" value="1"/>
</dbReference>
<evidence type="ECO:0000250" key="1">
    <source>
        <dbReference type="UniProtKB" id="P02698"/>
    </source>
</evidence>
<evidence type="ECO:0000305" key="2"/>
<comment type="function">
    <text>Guanine nucleotide-binding proteins (G proteins) are involved as a modulator or transducer in various transmembrane signaling systems. The beta and gamma chains are required for the GTPase activity, for replacement of GDP by GTP, and for G protein-effector interaction.</text>
</comment>
<comment type="subunit">
    <text>G proteins are composed of 3 units, alpha, beta and gamma.</text>
</comment>
<comment type="subcellular location">
    <subcellularLocation>
        <location evidence="2">Cell membrane</location>
        <topology evidence="2">Lipid-anchor</topology>
        <orientation evidence="2">Cytoplasmic side</orientation>
    </subcellularLocation>
</comment>
<comment type="tissue specificity">
    <text>Retinal rod outer segment.</text>
</comment>
<comment type="similarity">
    <text evidence="2">Belongs to the G protein gamma family.</text>
</comment>
<reference key="1">
    <citation type="journal article" date="1997" name="Res. Vet. Sci.">
        <title>Cloning of the cDNA encoding rod photoreceptor cGMP-phosphodiesterase alpha and gamma subunits from the retinal degenerate Labrador retriever dog.</title>
        <authorList>
            <person name="Kylma T."/>
            <person name="Paulin L."/>
            <person name="Hurwitz M.Y."/>
            <person name="Hurwitz R.L."/>
            <person name="Kommonen B."/>
        </authorList>
    </citation>
    <scope>NUCLEOTIDE SEQUENCE [MRNA]</scope>
</reference>
<reference key="2">
    <citation type="submission" date="2002-08" db="EMBL/GenBank/DDBJ databases">
        <title>Characterization of the canine GNGT1 gene.</title>
        <authorList>
            <person name="Dekomien G."/>
            <person name="Epplen J.T."/>
        </authorList>
    </citation>
    <scope>NUCLEOTIDE SEQUENCE [GENOMIC DNA]</scope>
</reference>
<sequence>MPVINIEDLTEKDKLKMEVDQLKKEVTLERMLVSKCCEEVRDYVEERSGEDPLVKGIPEDKNPFKELKGGCVIS</sequence>
<protein>
    <recommendedName>
        <fullName>Guanine nucleotide-binding protein G(T) subunit gamma-T1</fullName>
    </recommendedName>
    <alternativeName>
        <fullName>Transducin gamma chain</fullName>
    </alternativeName>
</protein>